<keyword id="KW-0002">3D-structure</keyword>
<keyword id="KW-0223">Dioxygenase</keyword>
<keyword id="KW-0284">Flavonoid biosynthesis</keyword>
<keyword id="KW-0408">Iron</keyword>
<keyword id="KW-0479">Metal-binding</keyword>
<keyword id="KW-0560">Oxidoreductase</keyword>
<keyword id="KW-1185">Reference proteome</keyword>
<keyword id="KW-0847">Vitamin C</keyword>
<evidence type="ECO:0000255" key="1">
    <source>
        <dbReference type="PROSITE-ProRule" id="PRU00805"/>
    </source>
</evidence>
<evidence type="ECO:0000269" key="2">
    <source>
    </source>
</evidence>
<evidence type="ECO:0000269" key="3">
    <source>
    </source>
</evidence>
<evidence type="ECO:0000269" key="4">
    <source>
    </source>
</evidence>
<evidence type="ECO:0000269" key="5">
    <source>
    </source>
</evidence>
<evidence type="ECO:0000269" key="6">
    <source>
    </source>
</evidence>
<evidence type="ECO:0000269" key="7">
    <source>
    </source>
</evidence>
<evidence type="ECO:0000269" key="8">
    <source>
    </source>
</evidence>
<evidence type="ECO:0000269" key="9">
    <source>
    </source>
</evidence>
<evidence type="ECO:0000269" key="10">
    <source>
    </source>
</evidence>
<evidence type="ECO:0000269" key="11">
    <source>
    </source>
</evidence>
<evidence type="ECO:0000305" key="12"/>
<evidence type="ECO:0007829" key="13">
    <source>
        <dbReference type="PDB" id="1GP6"/>
    </source>
</evidence>
<evidence type="ECO:0007829" key="14">
    <source>
        <dbReference type="PDB" id="2BRT"/>
    </source>
</evidence>
<accession>Q96323</accession>
<organism>
    <name type="scientific">Arabidopsis thaliana</name>
    <name type="common">Mouse-ear cress</name>
    <dbReference type="NCBI Taxonomy" id="3702"/>
    <lineage>
        <taxon>Eukaryota</taxon>
        <taxon>Viridiplantae</taxon>
        <taxon>Streptophyta</taxon>
        <taxon>Embryophyta</taxon>
        <taxon>Tracheophyta</taxon>
        <taxon>Spermatophyta</taxon>
        <taxon>Magnoliopsida</taxon>
        <taxon>eudicotyledons</taxon>
        <taxon>Gunneridae</taxon>
        <taxon>Pentapetalae</taxon>
        <taxon>rosids</taxon>
        <taxon>malvids</taxon>
        <taxon>Brassicales</taxon>
        <taxon>Brassicaceae</taxon>
        <taxon>Camelineae</taxon>
        <taxon>Arabidopsis</taxon>
    </lineage>
</organism>
<dbReference type="EC" id="1.14.20.4" evidence="6"/>
<dbReference type="EMBL" id="U70478">
    <property type="protein sequence ID" value="AAB09572.1"/>
    <property type="molecule type" value="mRNA"/>
</dbReference>
<dbReference type="EMBL" id="AL031018">
    <property type="protein sequence ID" value="CAA19803.1"/>
    <property type="molecule type" value="Genomic_DNA"/>
</dbReference>
<dbReference type="EMBL" id="AL161558">
    <property type="protein sequence ID" value="CAB79243.1"/>
    <property type="molecule type" value="Genomic_DNA"/>
</dbReference>
<dbReference type="EMBL" id="CP002687">
    <property type="protein sequence ID" value="AEE84672.1"/>
    <property type="molecule type" value="Genomic_DNA"/>
</dbReference>
<dbReference type="EMBL" id="CP002687">
    <property type="protein sequence ID" value="AEE84673.1"/>
    <property type="molecule type" value="Genomic_DNA"/>
</dbReference>
<dbReference type="EMBL" id="CP002687">
    <property type="protein sequence ID" value="ANM67022.1"/>
    <property type="molecule type" value="Genomic_DNA"/>
</dbReference>
<dbReference type="EMBL" id="AY088203">
    <property type="protein sequence ID" value="AAM65745.1"/>
    <property type="molecule type" value="mRNA"/>
</dbReference>
<dbReference type="PIR" id="T05119">
    <property type="entry name" value="T05119"/>
</dbReference>
<dbReference type="RefSeq" id="NP_001031700.1">
    <property type="nucleotide sequence ID" value="NM_001036623.1"/>
</dbReference>
<dbReference type="RefSeq" id="NP_001320035.1">
    <property type="nucleotide sequence ID" value="NM_001341563.1"/>
</dbReference>
<dbReference type="RefSeq" id="NP_194019.1">
    <property type="nucleotide sequence ID" value="NM_118417.2"/>
</dbReference>
<dbReference type="PDB" id="1GP4">
    <property type="method" value="X-ray"/>
    <property type="resolution" value="2.10 A"/>
    <property type="chains" value="A=1-356"/>
</dbReference>
<dbReference type="PDB" id="1GP5">
    <property type="method" value="X-ray"/>
    <property type="resolution" value="2.20 A"/>
    <property type="chains" value="A=1-356"/>
</dbReference>
<dbReference type="PDB" id="1GP6">
    <property type="method" value="X-ray"/>
    <property type="resolution" value="1.75 A"/>
    <property type="chains" value="A=1-356"/>
</dbReference>
<dbReference type="PDB" id="2BRT">
    <property type="method" value="X-ray"/>
    <property type="resolution" value="2.20 A"/>
    <property type="chains" value="A=2-356"/>
</dbReference>
<dbReference type="PDBsum" id="1GP4"/>
<dbReference type="PDBsum" id="1GP5"/>
<dbReference type="PDBsum" id="1GP6"/>
<dbReference type="PDBsum" id="2BRT"/>
<dbReference type="SMR" id="Q96323"/>
<dbReference type="BioGRID" id="13676">
    <property type="interactions" value="1"/>
</dbReference>
<dbReference type="FunCoup" id="Q96323">
    <property type="interactions" value="78"/>
</dbReference>
<dbReference type="STRING" id="3702.Q96323"/>
<dbReference type="iPTMnet" id="Q96323"/>
<dbReference type="PaxDb" id="3702-AT4G22880.1"/>
<dbReference type="ProteomicsDB" id="237135"/>
<dbReference type="EnsemblPlants" id="AT4G22880.1">
    <property type="protein sequence ID" value="AT4G22880.1"/>
    <property type="gene ID" value="AT4G22880"/>
</dbReference>
<dbReference type="EnsemblPlants" id="AT4G22880.2">
    <property type="protein sequence ID" value="AT4G22880.2"/>
    <property type="gene ID" value="AT4G22880"/>
</dbReference>
<dbReference type="EnsemblPlants" id="AT4G22880.3">
    <property type="protein sequence ID" value="AT4G22880.3"/>
    <property type="gene ID" value="AT4G22880"/>
</dbReference>
<dbReference type="GeneID" id="828387"/>
<dbReference type="Gramene" id="AT4G22880.1">
    <property type="protein sequence ID" value="AT4G22880.1"/>
    <property type="gene ID" value="AT4G22880"/>
</dbReference>
<dbReference type="Gramene" id="AT4G22880.2">
    <property type="protein sequence ID" value="AT4G22880.2"/>
    <property type="gene ID" value="AT4G22880"/>
</dbReference>
<dbReference type="Gramene" id="AT4G22880.3">
    <property type="protein sequence ID" value="AT4G22880.3"/>
    <property type="gene ID" value="AT4G22880"/>
</dbReference>
<dbReference type="KEGG" id="ath:AT4G22880"/>
<dbReference type="Araport" id="AT4G22880"/>
<dbReference type="TAIR" id="AT4G22880">
    <property type="gene designation" value="LDOX"/>
</dbReference>
<dbReference type="eggNOG" id="KOG0143">
    <property type="taxonomic scope" value="Eukaryota"/>
</dbReference>
<dbReference type="HOGENOM" id="CLU_010119_16_2_1"/>
<dbReference type="InParanoid" id="Q96323"/>
<dbReference type="OMA" id="AGMRILH"/>
<dbReference type="PhylomeDB" id="Q96323"/>
<dbReference type="BioCyc" id="ARA:AT4G22880-MONOMER"/>
<dbReference type="BioCyc" id="MetaCyc:AT4G22880-MONOMER"/>
<dbReference type="BRENDA" id="1.14.20.4">
    <property type="organism ID" value="399"/>
</dbReference>
<dbReference type="UniPathway" id="UPA00009"/>
<dbReference type="EvolutionaryTrace" id="Q96323"/>
<dbReference type="PRO" id="PR:Q96323"/>
<dbReference type="Proteomes" id="UP000006548">
    <property type="component" value="Chromosome 4"/>
</dbReference>
<dbReference type="ExpressionAtlas" id="Q96323">
    <property type="expression patterns" value="baseline and differential"/>
</dbReference>
<dbReference type="GO" id="GO:0031418">
    <property type="term" value="F:L-ascorbic acid binding"/>
    <property type="evidence" value="ECO:0007669"/>
    <property type="project" value="UniProtKB-KW"/>
</dbReference>
<dbReference type="GO" id="GO:0050589">
    <property type="term" value="F:leucocyanidin oxygenase activity"/>
    <property type="evidence" value="ECO:0000250"/>
    <property type="project" value="TAIR"/>
</dbReference>
<dbReference type="GO" id="GO:0046872">
    <property type="term" value="F:metal ion binding"/>
    <property type="evidence" value="ECO:0007669"/>
    <property type="project" value="UniProtKB-KW"/>
</dbReference>
<dbReference type="GO" id="GO:0009718">
    <property type="term" value="P:anthocyanin-containing compound biosynthetic process"/>
    <property type="evidence" value="ECO:0000304"/>
    <property type="project" value="TAIR"/>
</dbReference>
<dbReference type="GO" id="GO:0010023">
    <property type="term" value="P:proanthocyanidin biosynthetic process"/>
    <property type="evidence" value="ECO:0000315"/>
    <property type="project" value="TAIR"/>
</dbReference>
<dbReference type="GO" id="GO:0009753">
    <property type="term" value="P:response to jasmonic acid"/>
    <property type="evidence" value="ECO:0000270"/>
    <property type="project" value="TAIR"/>
</dbReference>
<dbReference type="GO" id="GO:0009611">
    <property type="term" value="P:response to wounding"/>
    <property type="evidence" value="ECO:0000270"/>
    <property type="project" value="TAIR"/>
</dbReference>
<dbReference type="GO" id="GO:0007033">
    <property type="term" value="P:vacuole organization"/>
    <property type="evidence" value="ECO:0000315"/>
    <property type="project" value="TAIR"/>
</dbReference>
<dbReference type="FunFam" id="2.60.120.330:FF:000009">
    <property type="entry name" value="Flavonol synthase"/>
    <property type="match status" value="1"/>
</dbReference>
<dbReference type="Gene3D" id="2.60.120.330">
    <property type="entry name" value="B-lactam Antibiotic, Isopenicillin N Synthase, Chain"/>
    <property type="match status" value="1"/>
</dbReference>
<dbReference type="InterPro" id="IPR026992">
    <property type="entry name" value="DIOX_N"/>
</dbReference>
<dbReference type="InterPro" id="IPR044861">
    <property type="entry name" value="IPNS-like_FE2OG_OXY"/>
</dbReference>
<dbReference type="InterPro" id="IPR027443">
    <property type="entry name" value="IPNS-like_sf"/>
</dbReference>
<dbReference type="InterPro" id="IPR005123">
    <property type="entry name" value="Oxoglu/Fe-dep_dioxygenase_dom"/>
</dbReference>
<dbReference type="InterPro" id="IPR050295">
    <property type="entry name" value="Plant_2OG-oxidoreductases"/>
</dbReference>
<dbReference type="PANTHER" id="PTHR47991">
    <property type="entry name" value="OXOGLUTARATE/IRON-DEPENDENT DIOXYGENASE"/>
    <property type="match status" value="1"/>
</dbReference>
<dbReference type="Pfam" id="PF03171">
    <property type="entry name" value="2OG-FeII_Oxy"/>
    <property type="match status" value="1"/>
</dbReference>
<dbReference type="Pfam" id="PF14226">
    <property type="entry name" value="DIOX_N"/>
    <property type="match status" value="1"/>
</dbReference>
<dbReference type="SUPFAM" id="SSF51197">
    <property type="entry name" value="Clavaminate synthase-like"/>
    <property type="match status" value="1"/>
</dbReference>
<dbReference type="PROSITE" id="PS51471">
    <property type="entry name" value="FE2OG_OXY"/>
    <property type="match status" value="1"/>
</dbReference>
<gene>
    <name type="primary">LDOX</name>
    <name type="ordered locus">At4g22880</name>
    <name type="ORF">F7H19.60</name>
</gene>
<name>LDOX_ARATH</name>
<reference key="1">
    <citation type="journal article" date="1997" name="Plant Physiol.">
        <title>Characterization of flavonol synthase and leucoanthocyanidin dioxygenase genes in Arabidopsis. Further evidence for differential regulation of 'early' and 'late' genes.</title>
        <authorList>
            <person name="Pelletier M.K."/>
            <person name="Murrell J.R."/>
            <person name="Shirley B.W."/>
        </authorList>
    </citation>
    <scope>NUCLEOTIDE SEQUENCE [MRNA]</scope>
    <scope>INDUCTION BY LIGHT</scope>
    <source>
        <strain>cv. Columbia</strain>
    </source>
</reference>
<reference key="2">
    <citation type="journal article" date="1999" name="Nature">
        <title>Sequence and analysis of chromosome 4 of the plant Arabidopsis thaliana.</title>
        <authorList>
            <person name="Mayer K.F.X."/>
            <person name="Schueller C."/>
            <person name="Wambutt R."/>
            <person name="Murphy G."/>
            <person name="Volckaert G."/>
            <person name="Pohl T."/>
            <person name="Duesterhoeft A."/>
            <person name="Stiekema W."/>
            <person name="Entian K.-D."/>
            <person name="Terryn N."/>
            <person name="Harris B."/>
            <person name="Ansorge W."/>
            <person name="Brandt P."/>
            <person name="Grivell L.A."/>
            <person name="Rieger M."/>
            <person name="Weichselgartner M."/>
            <person name="de Simone V."/>
            <person name="Obermaier B."/>
            <person name="Mache R."/>
            <person name="Mueller M."/>
            <person name="Kreis M."/>
            <person name="Delseny M."/>
            <person name="Puigdomenech P."/>
            <person name="Watson M."/>
            <person name="Schmidtheini T."/>
            <person name="Reichert B."/>
            <person name="Portetelle D."/>
            <person name="Perez-Alonso M."/>
            <person name="Boutry M."/>
            <person name="Bancroft I."/>
            <person name="Vos P."/>
            <person name="Hoheisel J."/>
            <person name="Zimmermann W."/>
            <person name="Wedler H."/>
            <person name="Ridley P."/>
            <person name="Langham S.-A."/>
            <person name="McCullagh B."/>
            <person name="Bilham L."/>
            <person name="Robben J."/>
            <person name="van der Schueren J."/>
            <person name="Grymonprez B."/>
            <person name="Chuang Y.-J."/>
            <person name="Vandenbussche F."/>
            <person name="Braeken M."/>
            <person name="Weltjens I."/>
            <person name="Voet M."/>
            <person name="Bastiaens I."/>
            <person name="Aert R."/>
            <person name="Defoor E."/>
            <person name="Weitzenegger T."/>
            <person name="Bothe G."/>
            <person name="Ramsperger U."/>
            <person name="Hilbert H."/>
            <person name="Braun M."/>
            <person name="Holzer E."/>
            <person name="Brandt A."/>
            <person name="Peters S."/>
            <person name="van Staveren M."/>
            <person name="Dirkse W."/>
            <person name="Mooijman P."/>
            <person name="Klein Lankhorst R."/>
            <person name="Rose M."/>
            <person name="Hauf J."/>
            <person name="Koetter P."/>
            <person name="Berneiser S."/>
            <person name="Hempel S."/>
            <person name="Feldpausch M."/>
            <person name="Lamberth S."/>
            <person name="Van den Daele H."/>
            <person name="De Keyser A."/>
            <person name="Buysshaert C."/>
            <person name="Gielen J."/>
            <person name="Villarroel R."/>
            <person name="De Clercq R."/>
            <person name="van Montagu M."/>
            <person name="Rogers J."/>
            <person name="Cronin A."/>
            <person name="Quail M.A."/>
            <person name="Bray-Allen S."/>
            <person name="Clark L."/>
            <person name="Doggett J."/>
            <person name="Hall S."/>
            <person name="Kay M."/>
            <person name="Lennard N."/>
            <person name="McLay K."/>
            <person name="Mayes R."/>
            <person name="Pettett A."/>
            <person name="Rajandream M.A."/>
            <person name="Lyne M."/>
            <person name="Benes V."/>
            <person name="Rechmann S."/>
            <person name="Borkova D."/>
            <person name="Bloecker H."/>
            <person name="Scharfe M."/>
            <person name="Grimm M."/>
            <person name="Loehnert T.-H."/>
            <person name="Dose S."/>
            <person name="de Haan M."/>
            <person name="Maarse A.C."/>
            <person name="Schaefer M."/>
            <person name="Mueller-Auer S."/>
            <person name="Gabel C."/>
            <person name="Fuchs M."/>
            <person name="Fartmann B."/>
            <person name="Granderath K."/>
            <person name="Dauner D."/>
            <person name="Herzl A."/>
            <person name="Neumann S."/>
            <person name="Argiriou A."/>
            <person name="Vitale D."/>
            <person name="Liguori R."/>
            <person name="Piravandi E."/>
            <person name="Massenet O."/>
            <person name="Quigley F."/>
            <person name="Clabauld G."/>
            <person name="Muendlein A."/>
            <person name="Felber R."/>
            <person name="Schnabl S."/>
            <person name="Hiller R."/>
            <person name="Schmidt W."/>
            <person name="Lecharny A."/>
            <person name="Aubourg S."/>
            <person name="Chefdor F."/>
            <person name="Cooke R."/>
            <person name="Berger C."/>
            <person name="Monfort A."/>
            <person name="Casacuberta E."/>
            <person name="Gibbons T."/>
            <person name="Weber N."/>
            <person name="Vandenbol M."/>
            <person name="Bargues M."/>
            <person name="Terol J."/>
            <person name="Torres A."/>
            <person name="Perez-Perez A."/>
            <person name="Purnelle B."/>
            <person name="Bent E."/>
            <person name="Johnson S."/>
            <person name="Tacon D."/>
            <person name="Jesse T."/>
            <person name="Heijnen L."/>
            <person name="Schwarz S."/>
            <person name="Scholler P."/>
            <person name="Heber S."/>
            <person name="Francs P."/>
            <person name="Bielke C."/>
            <person name="Frishman D."/>
            <person name="Haase D."/>
            <person name="Lemcke K."/>
            <person name="Mewes H.-W."/>
            <person name="Stocker S."/>
            <person name="Zaccaria P."/>
            <person name="Bevan M."/>
            <person name="Wilson R.K."/>
            <person name="de la Bastide M."/>
            <person name="Habermann K."/>
            <person name="Parnell L."/>
            <person name="Dedhia N."/>
            <person name="Gnoj L."/>
            <person name="Schutz K."/>
            <person name="Huang E."/>
            <person name="Spiegel L."/>
            <person name="Sekhon M."/>
            <person name="Murray J."/>
            <person name="Sheet P."/>
            <person name="Cordes M."/>
            <person name="Abu-Threideh J."/>
            <person name="Stoneking T."/>
            <person name="Kalicki J."/>
            <person name="Graves T."/>
            <person name="Harmon G."/>
            <person name="Edwards J."/>
            <person name="Latreille P."/>
            <person name="Courtney L."/>
            <person name="Cloud J."/>
            <person name="Abbott A."/>
            <person name="Scott K."/>
            <person name="Johnson D."/>
            <person name="Minx P."/>
            <person name="Bentley D."/>
            <person name="Fulton B."/>
            <person name="Miller N."/>
            <person name="Greco T."/>
            <person name="Kemp K."/>
            <person name="Kramer J."/>
            <person name="Fulton L."/>
            <person name="Mardis E."/>
            <person name="Dante M."/>
            <person name="Pepin K."/>
            <person name="Hillier L.W."/>
            <person name="Nelson J."/>
            <person name="Spieth J."/>
            <person name="Ryan E."/>
            <person name="Andrews S."/>
            <person name="Geisel C."/>
            <person name="Layman D."/>
            <person name="Du H."/>
            <person name="Ali J."/>
            <person name="Berghoff A."/>
            <person name="Jones K."/>
            <person name="Drone K."/>
            <person name="Cotton M."/>
            <person name="Joshu C."/>
            <person name="Antonoiu B."/>
            <person name="Zidanic M."/>
            <person name="Strong C."/>
            <person name="Sun H."/>
            <person name="Lamar B."/>
            <person name="Yordan C."/>
            <person name="Ma P."/>
            <person name="Zhong J."/>
            <person name="Preston R."/>
            <person name="Vil D."/>
            <person name="Shekher M."/>
            <person name="Matero A."/>
            <person name="Shah R."/>
            <person name="Swaby I.K."/>
            <person name="O'Shaughnessy A."/>
            <person name="Rodriguez M."/>
            <person name="Hoffman J."/>
            <person name="Till S."/>
            <person name="Granat S."/>
            <person name="Shohdy N."/>
            <person name="Hasegawa A."/>
            <person name="Hameed A."/>
            <person name="Lodhi M."/>
            <person name="Johnson A."/>
            <person name="Chen E."/>
            <person name="Marra M.A."/>
            <person name="Martienssen R."/>
            <person name="McCombie W.R."/>
        </authorList>
    </citation>
    <scope>NUCLEOTIDE SEQUENCE [LARGE SCALE GENOMIC DNA]</scope>
    <source>
        <strain>cv. Columbia</strain>
    </source>
</reference>
<reference key="3">
    <citation type="journal article" date="2017" name="Plant J.">
        <title>Araport11: a complete reannotation of the Arabidopsis thaliana reference genome.</title>
        <authorList>
            <person name="Cheng C.Y."/>
            <person name="Krishnakumar V."/>
            <person name="Chan A.P."/>
            <person name="Thibaud-Nissen F."/>
            <person name="Schobel S."/>
            <person name="Town C.D."/>
        </authorList>
    </citation>
    <scope>GENOME REANNOTATION</scope>
    <source>
        <strain>cv. Columbia</strain>
    </source>
</reference>
<reference key="4">
    <citation type="submission" date="2002-03" db="EMBL/GenBank/DDBJ databases">
        <title>Full-length cDNA from Arabidopsis thaliana.</title>
        <authorList>
            <person name="Brover V.V."/>
            <person name="Troukhan M.E."/>
            <person name="Alexandrov N.A."/>
            <person name="Lu Y.-P."/>
            <person name="Flavell R.B."/>
            <person name="Feldmann K.A."/>
        </authorList>
    </citation>
    <scope>NUCLEOTIDE SEQUENCE [LARGE SCALE MRNA]</scope>
</reference>
<reference key="5">
    <citation type="journal article" date="1999" name="Plant Mol. Biol.">
        <title>Disruption of specific flavonoid genes enhances the accumulation of flavonoid enzymes and end-products in Arabidopsis seedlings.</title>
        <authorList>
            <person name="Pelletier M.K."/>
            <person name="Burbulis I.E."/>
            <person name="Winkel-Shirley B."/>
        </authorList>
    </citation>
    <scope>TISSUE SPECIFICITY</scope>
</reference>
<reference key="6">
    <citation type="journal article" date="2003" name="Plant J.">
        <title>The Arabidopsis TDS4 gene encodes leucoanthocyanidin dioxygenase (LDOX) and is essential for proanthocyanidin synthesis and vacuole development.</title>
        <authorList>
            <person name="Abrahams S."/>
            <person name="Lee E."/>
            <person name="Walker A.R."/>
            <person name="Tanner G.J."/>
            <person name="Larkin P.J."/>
            <person name="Ashton A.R."/>
        </authorList>
    </citation>
    <scope>FUNCTION</scope>
    <scope>DISRUPTION PHENOTYPE</scope>
    <scope>MUTAGENESIS OF GLY-228</scope>
    <source>
        <strain>cv. Wassilewskija-4</strain>
    </source>
</reference>
<reference key="7">
    <citation type="journal article" date="2005" name="FEBS Lett.">
        <title>Incorporation of oxygen into the succinate co-product of iron(II) and 2-oxoglutarate dependent oxygenases from bacteria, plants and humans.</title>
        <authorList>
            <person name="Welford R.W."/>
            <person name="Kirkpatrick J.M."/>
            <person name="McNeill L.A."/>
            <person name="Puri M."/>
            <person name="Oldham N.J."/>
            <person name="Schofield C.J."/>
        </authorList>
    </citation>
    <scope>FUNCTION</scope>
    <scope>CATALYTIC ACTIVITY</scope>
</reference>
<reference key="8">
    <citation type="journal article" date="2006" name="Plant Physiol.">
        <title>Sucrose-specific induction of the anthocyanin biosynthetic pathway in Arabidopsis.</title>
        <authorList>
            <person name="Solfanelli C."/>
            <person name="Poggi A."/>
            <person name="Loreti E."/>
            <person name="Alpi A."/>
            <person name="Perata P."/>
        </authorList>
    </citation>
    <scope>INDUCTION BY SUCROSE</scope>
</reference>
<reference key="9">
    <citation type="journal article" date="2009" name="FEBS Lett.">
        <title>Arabidopsis thaliana expresses a second functional flavonol synthase.</title>
        <authorList>
            <person name="Preuss A."/>
            <person name="Stracke R."/>
            <person name="Weisshaar B."/>
            <person name="Hillebrecht A."/>
            <person name="Matern U."/>
            <person name="Martens S."/>
        </authorList>
    </citation>
    <scope>FUNCTION</scope>
    <scope>DISRUPTION PHENOTYPE</scope>
</reference>
<reference key="10">
    <citation type="journal article" date="2009" name="J. Exp. Bot.">
        <title>Molecular mechanism for jasmonate-induction of anthocyanin accumulation in Arabidopsis.</title>
        <authorList>
            <person name="Shan X."/>
            <person name="Zhang Y."/>
            <person name="Peng W."/>
            <person name="Wang Z."/>
            <person name="Xie D."/>
        </authorList>
    </citation>
    <scope>INDUCTION</scope>
</reference>
<reference key="11">
    <citation type="journal article" date="2011" name="Gene">
        <title>Leucoanthocyanidin dioxygenase in Arabidopsis thaliana: characterization of mutant alleles and regulation by MYB-BHLH-TTG1 transcription factor complexes.</title>
        <authorList>
            <person name="Appelhagen I."/>
            <person name="Jahns O."/>
            <person name="Bartelniewoehner L."/>
            <person name="Sagasser M."/>
            <person name="Weisshaar B."/>
            <person name="Stracke R."/>
        </authorList>
    </citation>
    <scope>FUNCTION</scope>
    <scope>DISRUPTION PHENOTYPE</scope>
    <scope>MUTAGENESIS OF GLY-78; CYS-220 AND GLY-228</scope>
    <source>
        <strain>cv. Est-1</strain>
        <strain>cv. Landsberg erecta</strain>
        <strain>cv. Wassilewskija-4</strain>
    </source>
</reference>
<reference key="12">
    <citation type="journal article" date="2013" name="Plant Physiol. Biochem.">
        <title>The flavonoid biosynthetic pathway in Arabidopsis: Structural and genetic diversity.</title>
        <authorList>
            <person name="Saito K."/>
            <person name="Yonekura-Sakakibara K."/>
            <person name="Nakabayashi R."/>
            <person name="Higashi Y."/>
            <person name="Yamazaki M."/>
            <person name="Tohge T."/>
            <person name="Fernie A.R."/>
        </authorList>
    </citation>
    <scope>REVIEW</scope>
    <scope>NOMENCLATURE</scope>
</reference>
<reference key="13">
    <citation type="journal article" date="2002" name="Structure">
        <title>Structure and mechanism of anthocyanidin synthase from Arabidopsis thaliana.</title>
        <authorList>
            <person name="Wilmouth R.C."/>
            <person name="Turnbull J.J."/>
            <person name="Welford R.W."/>
            <person name="Clifton I.J."/>
            <person name="Prescott A.G."/>
            <person name="Schofield C.J."/>
        </authorList>
    </citation>
    <scope>X-RAY CRYSTALLOGRAPHY (2.1 ANGSTROMS) IN COMPLEX WITH THE SUBSTRATE ANALOG DIHYDROQUERCETIN; 2-OXOGLUTARATE AND IRON ION</scope>
    <scope>COFACTOR</scope>
</reference>
<reference key="14">
    <citation type="journal article" date="2005" name="Org. Biomol. Chem.">
        <title>Structural and mechanistic studies on anthocyanidin synthase catalysed oxidation of flavanone substrates: the effect of C-2 stereochemistry on product selectivity and mechanism.</title>
        <authorList>
            <person name="Welford R.W."/>
            <person name="Clifton I.J."/>
            <person name="Turnbull J.J."/>
            <person name="Wilson S.C."/>
            <person name="Schofield C.J."/>
        </authorList>
    </citation>
    <scope>X-RAY CRYSTALLOGRAPHY (2.20 ANGSTROMS) OF 2-356 IN COMPLEX WITH THE SUBSTRATE ANALOG NARINGENIN; 2-OXOGLUTARATE AND IRON ION</scope>
    <scope>FUNCTION</scope>
    <scope>COFACTOR</scope>
    <scope>MUTAGENESIS OF LYS-128; ASN-131; TYR-142; GLU-230 AND LYS-341</scope>
</reference>
<comment type="function">
    <text evidence="4 5 6 8 10">Involved in anthocyanin and protoanthocyanidin biosynthesis by catalyzing the oxidation of leucoanthocyanidins into anthocyanidins. Possesses low flavonol synthase activity in vitro towards dihydrokaempferol and dihydroquercetin producing kaempferol and quercitin, respectively.</text>
</comment>
<comment type="catalytic activity">
    <reaction evidence="6">
        <text>a (2R,3S,4S)-leucoanthocyanidin + 2-oxoglutarate + O2 = a 4-H-anthocyanidin with a 3-hydroxy group + succinate + CO2 + 2 H2O</text>
        <dbReference type="Rhea" id="RHEA:54432"/>
        <dbReference type="ChEBI" id="CHEBI:15377"/>
        <dbReference type="ChEBI" id="CHEBI:15379"/>
        <dbReference type="ChEBI" id="CHEBI:16526"/>
        <dbReference type="ChEBI" id="CHEBI:16810"/>
        <dbReference type="ChEBI" id="CHEBI:30031"/>
        <dbReference type="ChEBI" id="CHEBI:138176"/>
        <dbReference type="ChEBI" id="CHEBI:138177"/>
        <dbReference type="EC" id="1.14.20.4"/>
    </reaction>
</comment>
<comment type="catalytic activity">
    <reaction evidence="6">
        <text>(2R,3S,4S)-3,4-leucopelargonidin + 2-oxoglutarate + O2 = (4S)-2,3-dehydroleucopelargonidin + succinate + CO2 + H2O + H(+)</text>
        <dbReference type="Rhea" id="RHEA:10768"/>
        <dbReference type="ChEBI" id="CHEBI:15377"/>
        <dbReference type="ChEBI" id="CHEBI:15378"/>
        <dbReference type="ChEBI" id="CHEBI:15379"/>
        <dbReference type="ChEBI" id="CHEBI:16526"/>
        <dbReference type="ChEBI" id="CHEBI:16810"/>
        <dbReference type="ChEBI" id="CHEBI:17343"/>
        <dbReference type="ChEBI" id="CHEBI:30031"/>
        <dbReference type="ChEBI" id="CHEBI:138950"/>
        <dbReference type="EC" id="1.14.20.4"/>
    </reaction>
</comment>
<comment type="catalytic activity">
    <reaction evidence="6">
        <text>(2R,3S,4S)-leucocyanidin + 2-oxoglutarate + O2 = (4S)-2,3-dehydroleucocyanidin + succinate + CO2 + H2O + H(+)</text>
        <dbReference type="Rhea" id="RHEA:10764"/>
        <dbReference type="ChEBI" id="CHEBI:11412"/>
        <dbReference type="ChEBI" id="CHEBI:15377"/>
        <dbReference type="ChEBI" id="CHEBI:15378"/>
        <dbReference type="ChEBI" id="CHEBI:15379"/>
        <dbReference type="ChEBI" id="CHEBI:16526"/>
        <dbReference type="ChEBI" id="CHEBI:16810"/>
        <dbReference type="ChEBI" id="CHEBI:30031"/>
        <dbReference type="ChEBI" id="CHEBI:138948"/>
        <dbReference type="EC" id="1.14.20.4"/>
    </reaction>
</comment>
<comment type="cofactor">
    <cofactor evidence="3 5">
        <name>L-ascorbate</name>
        <dbReference type="ChEBI" id="CHEBI:38290"/>
    </cofactor>
    <text evidence="3 5">Binds 1 ascorbate molecule per subunit.</text>
</comment>
<comment type="cofactor">
    <cofactor evidence="3 5">
        <name>Fe(2+)</name>
        <dbReference type="ChEBI" id="CHEBI:29033"/>
    </cofactor>
    <text evidence="3 5">Binds 1 Fe(2+) ion per subunit.</text>
</comment>
<comment type="pathway">
    <text>Pigment biosynthesis; anthocyanin biosynthesis.</text>
</comment>
<comment type="tissue specificity">
    <text evidence="2">Expressed in young seedlings (at protein level).</text>
</comment>
<comment type="induction">
    <text evidence="7 9 11">By methyl jasmonate, 6-benzylaminopurine, light and sucrose.</text>
</comment>
<comment type="disruption phenotype">
    <text evidence="4 8 10">No accumulation of anthocyanins, accumulation of protoanthocyanidin intermediates and presence of numerous small vacuoles in leaf epidermal cells.</text>
</comment>
<comment type="similarity">
    <text evidence="12">Belongs to the iron/ascorbate-dependent oxidoreductase family.</text>
</comment>
<proteinExistence type="evidence at protein level"/>
<feature type="chain" id="PRO_0000067299" description="Leucoanthocyanidin dioxygenase">
    <location>
        <begin position="1"/>
        <end position="356"/>
    </location>
</feature>
<feature type="domain" description="Fe2OG dioxygenase" evidence="1">
    <location>
        <begin position="208"/>
        <end position="307"/>
    </location>
</feature>
<feature type="binding site" evidence="3 5">
    <location>
        <position position="142"/>
    </location>
    <ligand>
        <name>substrate</name>
    </ligand>
</feature>
<feature type="binding site" evidence="3 5">
    <location>
        <position position="213"/>
    </location>
    <ligand>
        <name>substrate</name>
    </ligand>
</feature>
<feature type="binding site" evidence="3 5">
    <location>
        <begin position="215"/>
        <end position="217"/>
    </location>
    <ligand>
        <name>2-oxoglutarate</name>
        <dbReference type="ChEBI" id="CHEBI:16810"/>
    </ligand>
</feature>
<feature type="binding site" evidence="3 5">
    <location>
        <position position="232"/>
    </location>
    <ligand>
        <name>Fe cation</name>
        <dbReference type="ChEBI" id="CHEBI:24875"/>
        <note>catalytic</note>
    </ligand>
</feature>
<feature type="binding site" evidence="3 5">
    <location>
        <position position="233"/>
    </location>
    <ligand>
        <name>substrate</name>
    </ligand>
</feature>
<feature type="binding site" evidence="3 5">
    <location>
        <position position="234"/>
    </location>
    <ligand>
        <name>Fe cation</name>
        <dbReference type="ChEBI" id="CHEBI:24875"/>
        <note>catalytic</note>
    </ligand>
</feature>
<feature type="binding site" evidence="3 5">
    <location>
        <position position="288"/>
    </location>
    <ligand>
        <name>Fe cation</name>
        <dbReference type="ChEBI" id="CHEBI:24875"/>
        <note>catalytic</note>
    </ligand>
</feature>
<feature type="binding site" evidence="3 5">
    <location>
        <begin position="298"/>
        <end position="300"/>
    </location>
    <ligand>
        <name>2-oxoglutarate</name>
        <dbReference type="ChEBI" id="CHEBI:16810"/>
    </ligand>
</feature>
<feature type="binding site" evidence="3 5">
    <location>
        <position position="306"/>
    </location>
    <ligand>
        <name>substrate</name>
    </ligand>
</feature>
<feature type="binding site" evidence="3 5">
    <location>
        <position position="341"/>
    </location>
    <ligand>
        <name>substrate</name>
    </ligand>
</feature>
<feature type="mutagenesis site" description="In tt11-2; no accumulation of anthocyanin." evidence="10">
    <original>G</original>
    <variation>E</variation>
    <location>
        <position position="78"/>
    </location>
</feature>
<feature type="mutagenesis site" description="Retains two-third of the original activity." evidence="5">
    <original>K</original>
    <variation>A</variation>
    <location>
        <position position="128"/>
    </location>
</feature>
<feature type="mutagenesis site" description="Retains two-third of the original activity." evidence="5">
    <original>N</original>
    <variation>A</variation>
    <variation>D</variation>
    <location>
        <position position="131"/>
    </location>
</feature>
<feature type="mutagenesis site" description="Retains two-third of the original activity." evidence="5">
    <original>Y</original>
    <variation>H</variation>
    <location>
        <position position="142"/>
    </location>
</feature>
<feature type="mutagenesis site" description="In tt17; no accumulation of anthocyanin." evidence="10">
    <original>C</original>
    <variation>Y</variation>
    <location>
        <position position="220"/>
    </location>
</feature>
<feature type="mutagenesis site" description="In tds4-1; no accumulation of anthocyanin." evidence="4 10">
    <original>G</original>
    <variation>D</variation>
    <location>
        <position position="228"/>
    </location>
</feature>
<feature type="mutagenesis site" description="Retains one half of the original activity." evidence="5">
    <original>E</original>
    <variation>Q</variation>
    <location>
        <position position="230"/>
    </location>
</feature>
<feature type="mutagenesis site" description="Retains two-third of the original activity." evidence="5">
    <original>K</original>
    <variation>N</variation>
    <location>
        <position position="341"/>
    </location>
</feature>
<feature type="helix" evidence="13">
    <location>
        <begin position="7"/>
        <end position="12"/>
    </location>
</feature>
<feature type="helix" evidence="13">
    <location>
        <begin position="20"/>
        <end position="22"/>
    </location>
</feature>
<feature type="helix" evidence="13">
    <location>
        <begin position="26"/>
        <end position="29"/>
    </location>
</feature>
<feature type="helix" evidence="13">
    <location>
        <begin position="35"/>
        <end position="40"/>
    </location>
</feature>
<feature type="strand" evidence="13">
    <location>
        <begin position="49"/>
        <end position="51"/>
    </location>
</feature>
<feature type="turn" evidence="13">
    <location>
        <begin position="53"/>
        <end position="56"/>
    </location>
</feature>
<feature type="helix" evidence="13">
    <location>
        <begin position="60"/>
        <end position="76"/>
    </location>
</feature>
<feature type="strand" evidence="13">
    <location>
        <begin position="78"/>
        <end position="84"/>
    </location>
</feature>
<feature type="helix" evidence="13">
    <location>
        <begin position="89"/>
        <end position="103"/>
    </location>
</feature>
<feature type="helix" evidence="13">
    <location>
        <begin position="107"/>
        <end position="110"/>
    </location>
</feature>
<feature type="helix" evidence="13">
    <location>
        <begin position="111"/>
        <end position="113"/>
    </location>
</feature>
<feature type="helix" evidence="13">
    <location>
        <begin position="117"/>
        <end position="119"/>
    </location>
</feature>
<feature type="strand" evidence="13">
    <location>
        <begin position="123"/>
        <end position="126"/>
    </location>
</feature>
<feature type="strand" evidence="14">
    <location>
        <begin position="132"/>
        <end position="134"/>
    </location>
</feature>
<feature type="strand" evidence="13">
    <location>
        <begin position="141"/>
        <end position="149"/>
    </location>
</feature>
<feature type="helix" evidence="13">
    <location>
        <begin position="150"/>
        <end position="152"/>
    </location>
</feature>
<feature type="helix" evidence="13">
    <location>
        <begin position="155"/>
        <end position="157"/>
    </location>
</feature>
<feature type="helix" evidence="13">
    <location>
        <begin position="165"/>
        <end position="190"/>
    </location>
</feature>
<feature type="helix" evidence="13">
    <location>
        <begin position="197"/>
        <end position="201"/>
    </location>
</feature>
<feature type="helix" evidence="13">
    <location>
        <begin position="204"/>
        <end position="207"/>
    </location>
</feature>
<feature type="strand" evidence="13">
    <location>
        <begin position="209"/>
        <end position="217"/>
    </location>
</feature>
<feature type="turn" evidence="13">
    <location>
        <begin position="223"/>
        <end position="225"/>
    </location>
</feature>
<feature type="strand" evidence="13">
    <location>
        <begin position="228"/>
        <end position="232"/>
    </location>
</feature>
<feature type="strand" evidence="13">
    <location>
        <begin position="236"/>
        <end position="243"/>
    </location>
</feature>
<feature type="strand" evidence="13">
    <location>
        <begin position="249"/>
        <end position="253"/>
    </location>
</feature>
<feature type="strand" evidence="13">
    <location>
        <begin position="256"/>
        <end position="259"/>
    </location>
</feature>
<feature type="strand" evidence="13">
    <location>
        <begin position="267"/>
        <end position="271"/>
    </location>
</feature>
<feature type="helix" evidence="13">
    <location>
        <begin position="273"/>
        <end position="278"/>
    </location>
</feature>
<feature type="turn" evidence="13">
    <location>
        <begin position="279"/>
        <end position="281"/>
    </location>
</feature>
<feature type="strand" evidence="13">
    <location>
        <begin position="288"/>
        <end position="290"/>
    </location>
</feature>
<feature type="strand" evidence="13">
    <location>
        <begin position="298"/>
        <end position="306"/>
    </location>
</feature>
<feature type="turn" evidence="13">
    <location>
        <begin position="309"/>
        <end position="311"/>
    </location>
</feature>
<feature type="helix" evidence="13">
    <location>
        <begin position="318"/>
        <end position="320"/>
    </location>
</feature>
<feature type="strand" evidence="13">
    <location>
        <begin position="323"/>
        <end position="325"/>
    </location>
</feature>
<feature type="helix" evidence="13">
    <location>
        <begin position="334"/>
        <end position="349"/>
    </location>
</feature>
<sequence>MVAVERVESLAKSGIISIPKEYIRPKEELESINDVFLEEKKEDGPQVPTIDLKNIESDDEKIRENCIEELKKASLDWGVMHLINHGIPADLMERVKKAGEEFFSLSVEEKEKYANDQATGKIQGYGSKLANNASGQLEWEDYFFHLAYPEEKRDLSIWPKTPSDYIEATSEYAKCLRLLATKVFKALSVGLGLEPDRLEKEVGGLEELLLQMKINYYPKCPQPELALGVEAHTDVSALTFILHNMVPGLQLFYEGKWVTAKCVPDSIVMHIGDTLEILSNGKYKSILHRGLVNKEKVRISWAVFCEPPKDKIVLKPLPEMVSVESPAKFPPRTFAQHIEHKLFGKEQEELVSEKND</sequence>
<protein>
    <recommendedName>
        <fullName>Leucoanthocyanidin dioxygenase</fullName>
        <shortName>LDOX</shortName>
        <shortName>Leucocyanidin oxygenase</shortName>
        <ecNumber evidence="6">1.14.20.4</ecNumber>
    </recommendedName>
    <alternativeName>
        <fullName>Anthocyanidin synthase</fullName>
        <shortName>ANS</shortName>
    </alternativeName>
    <alternativeName>
        <fullName>Leucoanthocyanidin hydroxylase</fullName>
    </alternativeName>
    <alternativeName>
        <fullName>Protein TANNIN DEFICIENT SEED 4</fullName>
        <shortName>TDS4</shortName>
    </alternativeName>
    <alternativeName>
        <fullName>Protein TRANSPARENT TESTA 11</fullName>
        <shortName>TT11</shortName>
    </alternativeName>
    <alternativeName>
        <fullName>Protein TRANSPARENT TESTA 17</fullName>
        <shortName>TT17</shortName>
    </alternativeName>
    <alternativeName>
        <fullName>Protein TRANSPARENT TESTA 18</fullName>
        <shortName>TT18</shortName>
    </alternativeName>
</protein>